<sequence>MEELQGYLEIDRSRQQDFLYPLLFQEYIYALAHDHSLNRSILYEPMENLGYDNKSSSLIVKRFITRMYQQNHLIISANDSNQNKFVGHNKNLDSQTISEGFAIIVEIPFSLRLVSSLEGLEGKGKEIVKSRNLRSIHSIFSFLEDKLSHLNYVSDILIPHPIHPEILVQVLRSWVQDAPSLHLLRLFLHEYRNWTSLITPKKSISIFSKENQRFFLFLYNFHICECESIFVFLRKQSSHLRSTSFRALLERTHFYGKMEHFVVVFRNNFQTILWLVKDPFMHYVRYQGKSFLASKGTPLLMNKWKYYLVNFWQYYFYLWSQPSRIHINQLSNHSLDFLGYLSSVRLNPSVVSSQMLENLYLMDIAIKKFDTIIPIIPLIGSLAKAKFCNVSGHPVSKPVRADSSDSDIIDRFGRICKNLSHYHSGSSKKKSLYRIKYILRLSCARTLARKHKSTVRAFLKRLGSELLEEFFTEEEQVLSLIFPRTSSPSRRLYRKQIWYLDIIRINDLANHE</sequence>
<geneLocation type="chloroplast"/>
<dbReference type="EMBL" id="EU642711">
    <property type="protein sequence ID" value="ACF31439.1"/>
    <property type="molecule type" value="Genomic_DNA"/>
</dbReference>
<dbReference type="EMBL" id="DQ923116">
    <property type="protein sequence ID" value="ABI49759.1"/>
    <property type="molecule type" value="Genomic_DNA"/>
</dbReference>
<dbReference type="RefSeq" id="YP_740546.1">
    <property type="nucleotide sequence ID" value="NC_008335.1"/>
</dbReference>
<dbReference type="GeneID" id="4271343"/>
<dbReference type="GO" id="GO:0009507">
    <property type="term" value="C:chloroplast"/>
    <property type="evidence" value="ECO:0007669"/>
    <property type="project" value="UniProtKB-SubCell"/>
</dbReference>
<dbReference type="GO" id="GO:0003723">
    <property type="term" value="F:RNA binding"/>
    <property type="evidence" value="ECO:0007669"/>
    <property type="project" value="UniProtKB-KW"/>
</dbReference>
<dbReference type="GO" id="GO:0006397">
    <property type="term" value="P:mRNA processing"/>
    <property type="evidence" value="ECO:0007669"/>
    <property type="project" value="UniProtKB-KW"/>
</dbReference>
<dbReference type="GO" id="GO:0008380">
    <property type="term" value="P:RNA splicing"/>
    <property type="evidence" value="ECO:0007669"/>
    <property type="project" value="UniProtKB-UniRule"/>
</dbReference>
<dbReference type="GO" id="GO:0008033">
    <property type="term" value="P:tRNA processing"/>
    <property type="evidence" value="ECO:0007669"/>
    <property type="project" value="UniProtKB-KW"/>
</dbReference>
<dbReference type="HAMAP" id="MF_01390">
    <property type="entry name" value="MatK"/>
    <property type="match status" value="1"/>
</dbReference>
<dbReference type="InterPro" id="IPR024937">
    <property type="entry name" value="Domain_X"/>
</dbReference>
<dbReference type="InterPro" id="IPR002866">
    <property type="entry name" value="Maturase_MatK"/>
</dbReference>
<dbReference type="InterPro" id="IPR024942">
    <property type="entry name" value="Maturase_MatK_N"/>
</dbReference>
<dbReference type="PANTHER" id="PTHR34811">
    <property type="entry name" value="MATURASE K"/>
    <property type="match status" value="1"/>
</dbReference>
<dbReference type="PANTHER" id="PTHR34811:SF1">
    <property type="entry name" value="MATURASE K"/>
    <property type="match status" value="1"/>
</dbReference>
<dbReference type="Pfam" id="PF01348">
    <property type="entry name" value="Intron_maturas2"/>
    <property type="match status" value="1"/>
</dbReference>
<dbReference type="Pfam" id="PF01824">
    <property type="entry name" value="MatK_N"/>
    <property type="match status" value="1"/>
</dbReference>
<gene>
    <name evidence="1" type="primary">matK</name>
</gene>
<evidence type="ECO:0000255" key="1">
    <source>
        <dbReference type="HAMAP-Rule" id="MF_01390"/>
    </source>
</evidence>
<feature type="chain" id="PRO_0000355958" description="Maturase K">
    <location>
        <begin position="1"/>
        <end position="512"/>
    </location>
</feature>
<keyword id="KW-0150">Chloroplast</keyword>
<keyword id="KW-0507">mRNA processing</keyword>
<keyword id="KW-0934">Plastid</keyword>
<keyword id="KW-0694">RNA-binding</keyword>
<keyword id="KW-0819">tRNA processing</keyword>
<comment type="function">
    <text evidence="1">Usually encoded in the trnK tRNA gene intron. Probably assists in splicing its own and other chloroplast group II introns.</text>
</comment>
<comment type="subcellular location">
    <subcellularLocation>
        <location>Plastid</location>
        <location>Chloroplast</location>
    </subcellularLocation>
</comment>
<comment type="similarity">
    <text evidence="1">Belongs to the intron maturase 2 family. MatK subfamily.</text>
</comment>
<organism>
    <name type="scientific">Platanus occidentalis</name>
    <name type="common">Sycamore</name>
    <name type="synonym">American plane tree</name>
    <dbReference type="NCBI Taxonomy" id="4403"/>
    <lineage>
        <taxon>Eukaryota</taxon>
        <taxon>Viridiplantae</taxon>
        <taxon>Streptophyta</taxon>
        <taxon>Embryophyta</taxon>
        <taxon>Tracheophyta</taxon>
        <taxon>Spermatophyta</taxon>
        <taxon>Magnoliopsida</taxon>
        <taxon>Proteales</taxon>
        <taxon>Platanaceae</taxon>
        <taxon>Platanus</taxon>
    </lineage>
</organism>
<reference key="1">
    <citation type="journal article" date="2008" name="Am. J. Bot.">
        <title>A smaller Macadamia from a more vagile tribe: inference of phylogenetic relationships, divergence times, and diaspore evolution in Macadamia and relatives (tribe Macadamieae; Proteaceae).</title>
        <authorList>
            <person name="Mast A.R."/>
            <person name="Willis C.L."/>
            <person name="Jones E.H."/>
            <person name="Downs K.M."/>
            <person name="Weston P.H."/>
        </authorList>
        <dbReference type="AGRICOLA" id="IND44072383"/>
    </citation>
    <scope>NUCLEOTIDE SEQUENCE [GENOMIC DNA]</scope>
    <source>
        <strain>cv. PlaoccAM</strain>
    </source>
</reference>
<reference key="2">
    <citation type="journal article" date="2006" name="BMC Plant Biol.">
        <title>Rapid and accurate pyrosequencing of angiosperm plastid genomes.</title>
        <authorList>
            <person name="Moore M.J."/>
            <person name="Dhingra A."/>
            <person name="Soltis P.S."/>
            <person name="Shaw R."/>
            <person name="Farmerie W.G."/>
            <person name="Folta K.M."/>
            <person name="Soltis D.E."/>
        </authorList>
    </citation>
    <scope>NUCLEOTIDE SEQUENCE [LARGE SCALE GENOMIC DNA]</scope>
</reference>
<accession>Q09G65</accession>
<name>MATK_PLAOC</name>
<protein>
    <recommendedName>
        <fullName evidence="1">Maturase K</fullName>
    </recommendedName>
    <alternativeName>
        <fullName evidence="1">Intron maturase</fullName>
    </alternativeName>
</protein>
<proteinExistence type="inferred from homology"/>